<protein>
    <recommendedName>
        <fullName>Capsular polysaccharide biosynthesis glycosyltransferase CapM</fullName>
        <ecNumber>2.4.-.-</ecNumber>
    </recommendedName>
</protein>
<proteinExistence type="inferred from homology"/>
<dbReference type="EC" id="2.4.-.-"/>
<dbReference type="EMBL" id="U10927">
    <property type="protein sequence ID" value="AAA64652.1"/>
    <property type="molecule type" value="Genomic_DNA"/>
</dbReference>
<dbReference type="RefSeq" id="WP_115294919.1">
    <property type="nucleotide sequence ID" value="NZ_UGZL01000001.1"/>
</dbReference>
<dbReference type="SMR" id="P39862"/>
<dbReference type="CAZy" id="GT4">
    <property type="family name" value="Glycosyltransferase Family 4"/>
</dbReference>
<dbReference type="UniPathway" id="UPA00934"/>
<dbReference type="GO" id="GO:0016757">
    <property type="term" value="F:glycosyltransferase activity"/>
    <property type="evidence" value="ECO:0007669"/>
    <property type="project" value="UniProtKB-KW"/>
</dbReference>
<dbReference type="GO" id="GO:0045227">
    <property type="term" value="P:capsule polysaccharide biosynthetic process"/>
    <property type="evidence" value="ECO:0007669"/>
    <property type="project" value="UniProtKB-UniPathway"/>
</dbReference>
<dbReference type="CDD" id="cd03808">
    <property type="entry name" value="GT4_CapM-like"/>
    <property type="match status" value="1"/>
</dbReference>
<dbReference type="Gene3D" id="3.40.50.2000">
    <property type="entry name" value="Glycogen Phosphorylase B"/>
    <property type="match status" value="2"/>
</dbReference>
<dbReference type="InterPro" id="IPR001296">
    <property type="entry name" value="Glyco_trans_1"/>
</dbReference>
<dbReference type="InterPro" id="IPR028098">
    <property type="entry name" value="Glyco_trans_4-like_N"/>
</dbReference>
<dbReference type="PANTHER" id="PTHR12526">
    <property type="entry name" value="GLYCOSYLTRANSFERASE"/>
    <property type="match status" value="1"/>
</dbReference>
<dbReference type="PANTHER" id="PTHR12526:SF630">
    <property type="entry name" value="GLYCOSYLTRANSFERASE"/>
    <property type="match status" value="1"/>
</dbReference>
<dbReference type="Pfam" id="PF13477">
    <property type="entry name" value="Glyco_trans_4_2"/>
    <property type="match status" value="1"/>
</dbReference>
<dbReference type="Pfam" id="PF00534">
    <property type="entry name" value="Glycos_transf_1"/>
    <property type="match status" value="1"/>
</dbReference>
<dbReference type="SUPFAM" id="SSF53756">
    <property type="entry name" value="UDP-Glycosyltransferase/glycogen phosphorylase"/>
    <property type="match status" value="1"/>
</dbReference>
<organism>
    <name type="scientific">Staphylococcus aureus</name>
    <dbReference type="NCBI Taxonomy" id="1280"/>
    <lineage>
        <taxon>Bacteria</taxon>
        <taxon>Bacillati</taxon>
        <taxon>Bacillota</taxon>
        <taxon>Bacilli</taxon>
        <taxon>Bacillales</taxon>
        <taxon>Staphylococcaceae</taxon>
        <taxon>Staphylococcus</taxon>
    </lineage>
</organism>
<name>CAPM_STAAU</name>
<keyword id="KW-0972">Capsule biogenesis/degradation</keyword>
<keyword id="KW-0270">Exopolysaccharide synthesis</keyword>
<keyword id="KW-0328">Glycosyltransferase</keyword>
<keyword id="KW-0808">Transferase</keyword>
<feature type="chain" id="PRO_0000080294" description="Capsular polysaccharide biosynthesis glycosyltransferase CapM">
    <location>
        <begin position="1"/>
        <end position="380"/>
    </location>
</feature>
<sequence>MKNQKIFHLVTVSKSIPLMRGQIEFLRKKNMDVHIVSSDGKELKQYDNEIAHVIPMKRDIALFSDLKSLLKMILLFHKEKPFIVNSGTPKAGLIGTIAAFITQRPIRIYTVRGLRLETVKGFKYFVLYLMEKIAMFCATDIIAISESLKHKIITSNLAKENKITVLGFGSSNGIQFEKFQLDNNKLEEKYHKLLNDNFVIGYVGRIVKDKGIHELIQSFKIIVSKGYNVKLLVIGSLETENSIDESDYLFLTQNPNVVLIKHVSDPISFYNNMNVFVFPTHREGFGNVSIEAQALEVPVITTNVTGAIDTVVNGETGFIVEKGDFKAIAEKIEKLINDESLRETIGHNGRKRVENKFSSQIIWEELESMYNTFLKESEGK</sequence>
<gene>
    <name type="primary">capM</name>
</gene>
<evidence type="ECO:0000305" key="1"/>
<accession>P39862</accession>
<comment type="function">
    <text>Required for the biosynthesis of type 1 capsular polysaccharide.</text>
</comment>
<comment type="pathway">
    <text>Capsule biogenesis; capsule polysaccharide biosynthesis.</text>
</comment>
<comment type="similarity">
    <text evidence="1">Belongs to the glycosyltransferase group 1 family. Glycosyltransferase 4 subfamily.</text>
</comment>
<reference key="1">
    <citation type="journal article" date="1994" name="J. Bacteriol.">
        <title>Sequence analysis and molecular characterization of genes required for the biosynthesis of type 1 capsular polysaccharide in Staphylococcus aureus.</title>
        <authorList>
            <person name="Lin W.S."/>
            <person name="Cunneen T."/>
            <person name="Lee C.Y."/>
        </authorList>
    </citation>
    <scope>NUCLEOTIDE SEQUENCE [GENOMIC DNA]</scope>
    <source>
        <strain>ATCC 49951 / M / NCTC 10649</strain>
    </source>
</reference>